<dbReference type="EC" id="6.3.2.4" evidence="2"/>
<dbReference type="EMBL" id="BX569693">
    <property type="protein sequence ID" value="CAE08156.1"/>
    <property type="molecule type" value="Genomic_DNA"/>
</dbReference>
<dbReference type="RefSeq" id="WP_011128505.1">
    <property type="nucleotide sequence ID" value="NC_005070.1"/>
</dbReference>
<dbReference type="SMR" id="Q7U5Q9"/>
<dbReference type="STRING" id="84588.SYNW1641"/>
<dbReference type="KEGG" id="syw:SYNW1641"/>
<dbReference type="eggNOG" id="COG1181">
    <property type="taxonomic scope" value="Bacteria"/>
</dbReference>
<dbReference type="HOGENOM" id="CLU_039268_0_0_3"/>
<dbReference type="UniPathway" id="UPA00219"/>
<dbReference type="Proteomes" id="UP000001422">
    <property type="component" value="Chromosome"/>
</dbReference>
<dbReference type="GO" id="GO:0005829">
    <property type="term" value="C:cytosol"/>
    <property type="evidence" value="ECO:0007669"/>
    <property type="project" value="TreeGrafter"/>
</dbReference>
<dbReference type="GO" id="GO:0005524">
    <property type="term" value="F:ATP binding"/>
    <property type="evidence" value="ECO:0007669"/>
    <property type="project" value="UniProtKB-KW"/>
</dbReference>
<dbReference type="GO" id="GO:0008716">
    <property type="term" value="F:D-alanine-D-alanine ligase activity"/>
    <property type="evidence" value="ECO:0007669"/>
    <property type="project" value="UniProtKB-UniRule"/>
</dbReference>
<dbReference type="GO" id="GO:0046872">
    <property type="term" value="F:metal ion binding"/>
    <property type="evidence" value="ECO:0007669"/>
    <property type="project" value="UniProtKB-KW"/>
</dbReference>
<dbReference type="GO" id="GO:0071555">
    <property type="term" value="P:cell wall organization"/>
    <property type="evidence" value="ECO:0007669"/>
    <property type="project" value="UniProtKB-KW"/>
</dbReference>
<dbReference type="GO" id="GO:0009252">
    <property type="term" value="P:peptidoglycan biosynthetic process"/>
    <property type="evidence" value="ECO:0007669"/>
    <property type="project" value="UniProtKB-UniRule"/>
</dbReference>
<dbReference type="GO" id="GO:0008360">
    <property type="term" value="P:regulation of cell shape"/>
    <property type="evidence" value="ECO:0007669"/>
    <property type="project" value="UniProtKB-KW"/>
</dbReference>
<dbReference type="FunFam" id="3.30.1490.20:FF:000007">
    <property type="entry name" value="D-alanine--D-alanine ligase"/>
    <property type="match status" value="1"/>
</dbReference>
<dbReference type="FunFam" id="3.30.470.20:FF:000008">
    <property type="entry name" value="D-alanine--D-alanine ligase"/>
    <property type="match status" value="1"/>
</dbReference>
<dbReference type="Gene3D" id="3.40.50.20">
    <property type="match status" value="1"/>
</dbReference>
<dbReference type="Gene3D" id="3.30.1490.20">
    <property type="entry name" value="ATP-grasp fold, A domain"/>
    <property type="match status" value="1"/>
</dbReference>
<dbReference type="Gene3D" id="3.30.470.20">
    <property type="entry name" value="ATP-grasp fold, B domain"/>
    <property type="match status" value="1"/>
</dbReference>
<dbReference type="HAMAP" id="MF_00047">
    <property type="entry name" value="Dala_Dala_lig"/>
    <property type="match status" value="1"/>
</dbReference>
<dbReference type="InterPro" id="IPR011761">
    <property type="entry name" value="ATP-grasp"/>
</dbReference>
<dbReference type="InterPro" id="IPR013815">
    <property type="entry name" value="ATP_grasp_subdomain_1"/>
</dbReference>
<dbReference type="InterPro" id="IPR000291">
    <property type="entry name" value="D-Ala_lig_Van_CS"/>
</dbReference>
<dbReference type="InterPro" id="IPR005905">
    <property type="entry name" value="D_ala_D_ala"/>
</dbReference>
<dbReference type="InterPro" id="IPR011095">
    <property type="entry name" value="Dala_Dala_lig_C"/>
</dbReference>
<dbReference type="InterPro" id="IPR011127">
    <property type="entry name" value="Dala_Dala_lig_N"/>
</dbReference>
<dbReference type="InterPro" id="IPR016185">
    <property type="entry name" value="PreATP-grasp_dom_sf"/>
</dbReference>
<dbReference type="NCBIfam" id="TIGR01205">
    <property type="entry name" value="D_ala_D_alaTIGR"/>
    <property type="match status" value="1"/>
</dbReference>
<dbReference type="NCBIfam" id="NF002528">
    <property type="entry name" value="PRK01966.1-4"/>
    <property type="match status" value="1"/>
</dbReference>
<dbReference type="PANTHER" id="PTHR23132">
    <property type="entry name" value="D-ALANINE--D-ALANINE LIGASE"/>
    <property type="match status" value="1"/>
</dbReference>
<dbReference type="PANTHER" id="PTHR23132:SF25">
    <property type="entry name" value="D-ALANINE--D-ALANINE LIGASE A"/>
    <property type="match status" value="1"/>
</dbReference>
<dbReference type="Pfam" id="PF07478">
    <property type="entry name" value="Dala_Dala_lig_C"/>
    <property type="match status" value="1"/>
</dbReference>
<dbReference type="Pfam" id="PF01820">
    <property type="entry name" value="Dala_Dala_lig_N"/>
    <property type="match status" value="1"/>
</dbReference>
<dbReference type="PIRSF" id="PIRSF039102">
    <property type="entry name" value="Ddl/VanB"/>
    <property type="match status" value="1"/>
</dbReference>
<dbReference type="SUPFAM" id="SSF56059">
    <property type="entry name" value="Glutathione synthetase ATP-binding domain-like"/>
    <property type="match status" value="1"/>
</dbReference>
<dbReference type="SUPFAM" id="SSF52440">
    <property type="entry name" value="PreATP-grasp domain"/>
    <property type="match status" value="1"/>
</dbReference>
<dbReference type="PROSITE" id="PS50975">
    <property type="entry name" value="ATP_GRASP"/>
    <property type="match status" value="1"/>
</dbReference>
<dbReference type="PROSITE" id="PS00843">
    <property type="entry name" value="DALA_DALA_LIGASE_1"/>
    <property type="match status" value="1"/>
</dbReference>
<dbReference type="PROSITE" id="PS00844">
    <property type="entry name" value="DALA_DALA_LIGASE_2"/>
    <property type="match status" value="1"/>
</dbReference>
<protein>
    <recommendedName>
        <fullName evidence="2">D-alanine--D-alanine ligase</fullName>
        <ecNumber evidence="2">6.3.2.4</ecNumber>
    </recommendedName>
    <alternativeName>
        <fullName evidence="2">D-Ala-D-Ala ligase</fullName>
    </alternativeName>
    <alternativeName>
        <fullName evidence="2">D-alanylalanine synthetase</fullName>
    </alternativeName>
</protein>
<comment type="function">
    <text evidence="2">Cell wall formation.</text>
</comment>
<comment type="catalytic activity">
    <reaction evidence="2">
        <text>2 D-alanine + ATP = D-alanyl-D-alanine + ADP + phosphate + H(+)</text>
        <dbReference type="Rhea" id="RHEA:11224"/>
        <dbReference type="ChEBI" id="CHEBI:15378"/>
        <dbReference type="ChEBI" id="CHEBI:30616"/>
        <dbReference type="ChEBI" id="CHEBI:43474"/>
        <dbReference type="ChEBI" id="CHEBI:57416"/>
        <dbReference type="ChEBI" id="CHEBI:57822"/>
        <dbReference type="ChEBI" id="CHEBI:456216"/>
        <dbReference type="EC" id="6.3.2.4"/>
    </reaction>
</comment>
<comment type="cofactor">
    <cofactor evidence="1">
        <name>Mg(2+)</name>
        <dbReference type="ChEBI" id="CHEBI:18420"/>
    </cofactor>
    <cofactor evidence="1">
        <name>Mn(2+)</name>
        <dbReference type="ChEBI" id="CHEBI:29035"/>
    </cofactor>
    <text evidence="1">Binds 2 magnesium or manganese ions per subunit.</text>
</comment>
<comment type="pathway">
    <text evidence="2">Cell wall biogenesis; peptidoglycan biosynthesis.</text>
</comment>
<comment type="subcellular location">
    <subcellularLocation>
        <location evidence="2">Cytoplasm</location>
    </subcellularLocation>
</comment>
<comment type="similarity">
    <text evidence="2">Belongs to the D-alanine--D-alanine ligase family.</text>
</comment>
<accession>Q7U5Q9</accession>
<evidence type="ECO:0000250" key="1"/>
<evidence type="ECO:0000255" key="2">
    <source>
        <dbReference type="HAMAP-Rule" id="MF_00047"/>
    </source>
</evidence>
<reference key="1">
    <citation type="journal article" date="2003" name="Nature">
        <title>The genome of a motile marine Synechococcus.</title>
        <authorList>
            <person name="Palenik B."/>
            <person name="Brahamsha B."/>
            <person name="Larimer F.W."/>
            <person name="Land M.L."/>
            <person name="Hauser L."/>
            <person name="Chain P."/>
            <person name="Lamerdin J.E."/>
            <person name="Regala W."/>
            <person name="Allen E.E."/>
            <person name="McCarren J."/>
            <person name="Paulsen I.T."/>
            <person name="Dufresne A."/>
            <person name="Partensky F."/>
            <person name="Webb E.A."/>
            <person name="Waterbury J."/>
        </authorList>
    </citation>
    <scope>NUCLEOTIDE SEQUENCE [LARGE SCALE GENOMIC DNA]</scope>
    <source>
        <strain>WH8102</strain>
    </source>
</reference>
<proteinExistence type="inferred from homology"/>
<gene>
    <name evidence="2" type="primary">ddl</name>
    <name type="synonym">ddlB</name>
    <name type="ordered locus">SYNW1641</name>
</gene>
<keyword id="KW-0067">ATP-binding</keyword>
<keyword id="KW-0133">Cell shape</keyword>
<keyword id="KW-0961">Cell wall biogenesis/degradation</keyword>
<keyword id="KW-0963">Cytoplasm</keyword>
<keyword id="KW-0436">Ligase</keyword>
<keyword id="KW-0460">Magnesium</keyword>
<keyword id="KW-0464">Manganese</keyword>
<keyword id="KW-0479">Metal-binding</keyword>
<keyword id="KW-0547">Nucleotide-binding</keyword>
<keyword id="KW-0573">Peptidoglycan synthesis</keyword>
<organism>
    <name type="scientific">Parasynechococcus marenigrum (strain WH8102)</name>
    <dbReference type="NCBI Taxonomy" id="84588"/>
    <lineage>
        <taxon>Bacteria</taxon>
        <taxon>Bacillati</taxon>
        <taxon>Cyanobacteriota</taxon>
        <taxon>Cyanophyceae</taxon>
        <taxon>Synechococcales</taxon>
        <taxon>Prochlorococcaceae</taxon>
        <taxon>Parasynechococcus</taxon>
        <taxon>Parasynechococcus marenigrum</taxon>
    </lineage>
</organism>
<feature type="chain" id="PRO_0000177894" description="D-alanine--D-alanine ligase">
    <location>
        <begin position="1"/>
        <end position="353"/>
    </location>
</feature>
<feature type="domain" description="ATP-grasp" evidence="2">
    <location>
        <begin position="141"/>
        <end position="349"/>
    </location>
</feature>
<feature type="binding site" evidence="2">
    <location>
        <begin position="176"/>
        <end position="231"/>
    </location>
    <ligand>
        <name>ATP</name>
        <dbReference type="ChEBI" id="CHEBI:30616"/>
    </ligand>
</feature>
<feature type="binding site" evidence="2">
    <location>
        <position position="302"/>
    </location>
    <ligand>
        <name>Mg(2+)</name>
        <dbReference type="ChEBI" id="CHEBI:18420"/>
        <label>1</label>
    </ligand>
</feature>
<feature type="binding site" evidence="2">
    <location>
        <position position="316"/>
    </location>
    <ligand>
        <name>Mg(2+)</name>
        <dbReference type="ChEBI" id="CHEBI:18420"/>
        <label>1</label>
    </ligand>
</feature>
<feature type="binding site" evidence="2">
    <location>
        <position position="316"/>
    </location>
    <ligand>
        <name>Mg(2+)</name>
        <dbReference type="ChEBI" id="CHEBI:18420"/>
        <label>2</label>
    </ligand>
</feature>
<feature type="binding site" evidence="2">
    <location>
        <position position="318"/>
    </location>
    <ligand>
        <name>Mg(2+)</name>
        <dbReference type="ChEBI" id="CHEBI:18420"/>
        <label>2</label>
    </ligand>
</feature>
<name>DDL_PARMW</name>
<sequence>MSSSPTTVGVVFGGCSGEHDVSIRSAQTVAKGLTLGANRERYRVVLVYIDRDGRWWGPDLAGKVLSSGCPPADSDLPQPLPAPGFRGLPAGTDVVAVWYPVLHGPNGEDGTIQGLFELMQQPYVGAGVLGSAVSMDKQAMKAALAGAGLAQVPYVCAQADELSDAARQEALLKRIESGLCYPCFIKPANLGSSVGISKARNREELIHGLRLAATLDPRLVVEQGVQARELECAVLGGTTLRASVVGEVRFDADWYDYETKYTDGRSTTLIPAPLPDGIVEAIRSQSIQACAAVGVTGMARVDFFYDDSRDRVWLNEINTLPGFTSQSMYPMLWEASGVTLEQLVHELLESAGQ</sequence>